<proteinExistence type="inferred from homology"/>
<name>NPD1_PSEAE</name>
<dbReference type="EC" id="2.3.1.286" evidence="1 2"/>
<dbReference type="EMBL" id="AE004091">
    <property type="protein sequence ID" value="AAG04514.1"/>
    <property type="molecule type" value="Genomic_DNA"/>
</dbReference>
<dbReference type="PIR" id="A83506">
    <property type="entry name" value="A83506"/>
</dbReference>
<dbReference type="RefSeq" id="NP_249816.1">
    <property type="nucleotide sequence ID" value="NC_002516.2"/>
</dbReference>
<dbReference type="RefSeq" id="WP_003112491.1">
    <property type="nucleotide sequence ID" value="NZ_QZGE01000006.1"/>
</dbReference>
<dbReference type="SMR" id="Q9I4L0"/>
<dbReference type="FunCoup" id="Q9I4L0">
    <property type="interactions" value="518"/>
</dbReference>
<dbReference type="STRING" id="208964.PA1125"/>
<dbReference type="PaxDb" id="208964-PA1125"/>
<dbReference type="DNASU" id="879981"/>
<dbReference type="GeneID" id="879981"/>
<dbReference type="KEGG" id="pae:PA1125"/>
<dbReference type="PATRIC" id="fig|208964.12.peg.1170"/>
<dbReference type="PseudoCAP" id="PA1125"/>
<dbReference type="HOGENOM" id="CLU_023643_3_1_6"/>
<dbReference type="InParanoid" id="Q9I4L0"/>
<dbReference type="OrthoDB" id="9800582at2"/>
<dbReference type="PhylomeDB" id="Q9I4L0"/>
<dbReference type="BioCyc" id="PAER208964:G1FZ6-1151-MONOMER"/>
<dbReference type="Proteomes" id="UP000002438">
    <property type="component" value="Chromosome"/>
</dbReference>
<dbReference type="GO" id="GO:0005737">
    <property type="term" value="C:cytoplasm"/>
    <property type="evidence" value="ECO:0007669"/>
    <property type="project" value="UniProtKB-SubCell"/>
</dbReference>
<dbReference type="GO" id="GO:0017136">
    <property type="term" value="F:histone deacetylase activity, NAD-dependent"/>
    <property type="evidence" value="ECO:0000318"/>
    <property type="project" value="GO_Central"/>
</dbReference>
<dbReference type="GO" id="GO:0070403">
    <property type="term" value="F:NAD+ binding"/>
    <property type="evidence" value="ECO:0000318"/>
    <property type="project" value="GO_Central"/>
</dbReference>
<dbReference type="GO" id="GO:0036054">
    <property type="term" value="F:protein-malonyllysine demalonylase activity"/>
    <property type="evidence" value="ECO:0007669"/>
    <property type="project" value="InterPro"/>
</dbReference>
<dbReference type="GO" id="GO:0036055">
    <property type="term" value="F:protein-succinyllysine desuccinylase activity"/>
    <property type="evidence" value="ECO:0007669"/>
    <property type="project" value="UniProtKB-UniRule"/>
</dbReference>
<dbReference type="GO" id="GO:0008270">
    <property type="term" value="F:zinc ion binding"/>
    <property type="evidence" value="ECO:0007669"/>
    <property type="project" value="UniProtKB-UniRule"/>
</dbReference>
<dbReference type="CDD" id="cd01412">
    <property type="entry name" value="SIRT5_Af1_CobB"/>
    <property type="match status" value="1"/>
</dbReference>
<dbReference type="Gene3D" id="3.30.1600.10">
    <property type="entry name" value="SIR2/SIRT2 'Small Domain"/>
    <property type="match status" value="1"/>
</dbReference>
<dbReference type="Gene3D" id="3.40.50.1220">
    <property type="entry name" value="TPP-binding domain"/>
    <property type="match status" value="1"/>
</dbReference>
<dbReference type="HAMAP" id="MF_01121">
    <property type="entry name" value="Sirtuin_ClassIII"/>
    <property type="match status" value="1"/>
</dbReference>
<dbReference type="InterPro" id="IPR029035">
    <property type="entry name" value="DHS-like_NAD/FAD-binding_dom"/>
</dbReference>
<dbReference type="InterPro" id="IPR050134">
    <property type="entry name" value="NAD-dep_sirtuin_deacylases"/>
</dbReference>
<dbReference type="InterPro" id="IPR003000">
    <property type="entry name" value="Sirtuin"/>
</dbReference>
<dbReference type="InterPro" id="IPR026591">
    <property type="entry name" value="Sirtuin_cat_small_dom_sf"/>
</dbReference>
<dbReference type="InterPro" id="IPR027546">
    <property type="entry name" value="Sirtuin_class_III"/>
</dbReference>
<dbReference type="InterPro" id="IPR026590">
    <property type="entry name" value="Ssirtuin_cat_dom"/>
</dbReference>
<dbReference type="NCBIfam" id="NF001753">
    <property type="entry name" value="PRK00481.1-3"/>
    <property type="match status" value="1"/>
</dbReference>
<dbReference type="PANTHER" id="PTHR11085">
    <property type="entry name" value="NAD-DEPENDENT PROTEIN DEACYLASE SIRTUIN-5, MITOCHONDRIAL-RELATED"/>
    <property type="match status" value="1"/>
</dbReference>
<dbReference type="PANTHER" id="PTHR11085:SF10">
    <property type="entry name" value="NAD-DEPENDENT PROTEIN DEACYLASE SIRTUIN-5, MITOCHONDRIAL-RELATED"/>
    <property type="match status" value="1"/>
</dbReference>
<dbReference type="Pfam" id="PF02146">
    <property type="entry name" value="SIR2"/>
    <property type="match status" value="1"/>
</dbReference>
<dbReference type="SUPFAM" id="SSF52467">
    <property type="entry name" value="DHS-like NAD/FAD-binding domain"/>
    <property type="match status" value="1"/>
</dbReference>
<dbReference type="PROSITE" id="PS50305">
    <property type="entry name" value="SIRTUIN"/>
    <property type="match status" value="1"/>
</dbReference>
<protein>
    <recommendedName>
        <fullName evidence="1">NAD-dependent protein deacylase 1</fullName>
        <ecNumber evidence="1 2">2.3.1.286</ecNumber>
    </recommendedName>
    <alternativeName>
        <fullName evidence="1">Regulatory protein SIR2 homolog 1</fullName>
    </alternativeName>
</protein>
<accession>Q9I4L0</accession>
<gene>
    <name evidence="1" type="primary">cobB1</name>
    <name type="ordered locus">PA1125</name>
</gene>
<feature type="chain" id="PRO_0000110336" description="NAD-dependent protein deacylase 1">
    <location>
        <begin position="1"/>
        <end position="250"/>
    </location>
</feature>
<feature type="domain" description="Deacetylase sirtuin-type" evidence="2">
    <location>
        <begin position="1"/>
        <end position="250"/>
    </location>
</feature>
<feature type="active site" description="Proton acceptor" evidence="2">
    <location>
        <position position="116"/>
    </location>
</feature>
<feature type="binding site" evidence="1">
    <location>
        <begin position="19"/>
        <end position="39"/>
    </location>
    <ligand>
        <name>NAD(+)</name>
        <dbReference type="ChEBI" id="CHEBI:57540"/>
    </ligand>
</feature>
<feature type="binding site" evidence="1">
    <location>
        <position position="64"/>
    </location>
    <ligand>
        <name>substrate</name>
    </ligand>
</feature>
<feature type="binding site" evidence="1">
    <location>
        <position position="67"/>
    </location>
    <ligand>
        <name>substrate</name>
    </ligand>
</feature>
<feature type="binding site" evidence="1">
    <location>
        <begin position="98"/>
        <end position="101"/>
    </location>
    <ligand>
        <name>NAD(+)</name>
        <dbReference type="ChEBI" id="CHEBI:57540"/>
    </ligand>
</feature>
<feature type="binding site" evidence="1">
    <location>
        <position position="124"/>
    </location>
    <ligand>
        <name>Zn(2+)</name>
        <dbReference type="ChEBI" id="CHEBI:29105"/>
    </ligand>
</feature>
<feature type="binding site" evidence="1">
    <location>
        <position position="127"/>
    </location>
    <ligand>
        <name>Zn(2+)</name>
        <dbReference type="ChEBI" id="CHEBI:29105"/>
    </ligand>
</feature>
<feature type="binding site" evidence="1">
    <location>
        <position position="152"/>
    </location>
    <ligand>
        <name>Zn(2+)</name>
        <dbReference type="ChEBI" id="CHEBI:29105"/>
    </ligand>
</feature>
<feature type="binding site" evidence="1">
    <location>
        <position position="155"/>
    </location>
    <ligand>
        <name>Zn(2+)</name>
        <dbReference type="ChEBI" id="CHEBI:29105"/>
    </ligand>
</feature>
<feature type="binding site" evidence="1">
    <location>
        <begin position="192"/>
        <end position="194"/>
    </location>
    <ligand>
        <name>NAD(+)</name>
        <dbReference type="ChEBI" id="CHEBI:57540"/>
    </ligand>
</feature>
<feature type="binding site" evidence="1">
    <location>
        <begin position="218"/>
        <end position="220"/>
    </location>
    <ligand>
        <name>NAD(+)</name>
        <dbReference type="ChEBI" id="CHEBI:57540"/>
    </ligand>
</feature>
<feature type="binding site" evidence="1">
    <location>
        <position position="236"/>
    </location>
    <ligand>
        <name>NAD(+)</name>
        <dbReference type="ChEBI" id="CHEBI:57540"/>
    </ligand>
</feature>
<reference key="1">
    <citation type="journal article" date="2000" name="Nature">
        <title>Complete genome sequence of Pseudomonas aeruginosa PAO1, an opportunistic pathogen.</title>
        <authorList>
            <person name="Stover C.K."/>
            <person name="Pham X.-Q.T."/>
            <person name="Erwin A.L."/>
            <person name="Mizoguchi S.D."/>
            <person name="Warrener P."/>
            <person name="Hickey M.J."/>
            <person name="Brinkman F.S.L."/>
            <person name="Hufnagle W.O."/>
            <person name="Kowalik D.J."/>
            <person name="Lagrou M."/>
            <person name="Garber R.L."/>
            <person name="Goltry L."/>
            <person name="Tolentino E."/>
            <person name="Westbrock-Wadman S."/>
            <person name="Yuan Y."/>
            <person name="Brody L.L."/>
            <person name="Coulter S.N."/>
            <person name="Folger K.R."/>
            <person name="Kas A."/>
            <person name="Larbig K."/>
            <person name="Lim R.M."/>
            <person name="Smith K.A."/>
            <person name="Spencer D.H."/>
            <person name="Wong G.K.-S."/>
            <person name="Wu Z."/>
            <person name="Paulsen I.T."/>
            <person name="Reizer J."/>
            <person name="Saier M.H. Jr."/>
            <person name="Hancock R.E.W."/>
            <person name="Lory S."/>
            <person name="Olson M.V."/>
        </authorList>
    </citation>
    <scope>NUCLEOTIDE SEQUENCE [LARGE SCALE GENOMIC DNA]</scope>
    <source>
        <strain>ATCC 15692 / DSM 22644 / CIP 104116 / JCM 14847 / LMG 12228 / 1C / PRS 101 / PAO1</strain>
    </source>
</reference>
<evidence type="ECO:0000255" key="1">
    <source>
        <dbReference type="HAMAP-Rule" id="MF_01121"/>
    </source>
</evidence>
<evidence type="ECO:0000255" key="2">
    <source>
        <dbReference type="PROSITE-ProRule" id="PRU00236"/>
    </source>
</evidence>
<organism>
    <name type="scientific">Pseudomonas aeruginosa (strain ATCC 15692 / DSM 22644 / CIP 104116 / JCM 14847 / LMG 12228 / 1C / PRS 101 / PAO1)</name>
    <dbReference type="NCBI Taxonomy" id="208964"/>
    <lineage>
        <taxon>Bacteria</taxon>
        <taxon>Pseudomonadati</taxon>
        <taxon>Pseudomonadota</taxon>
        <taxon>Gammaproteobacteria</taxon>
        <taxon>Pseudomonadales</taxon>
        <taxon>Pseudomonadaceae</taxon>
        <taxon>Pseudomonas</taxon>
    </lineage>
</organism>
<keyword id="KW-0963">Cytoplasm</keyword>
<keyword id="KW-0479">Metal-binding</keyword>
<keyword id="KW-0520">NAD</keyword>
<keyword id="KW-1185">Reference proteome</keyword>
<keyword id="KW-0808">Transferase</keyword>
<keyword id="KW-0862">Zinc</keyword>
<sequence>MRAVVELLAGARRLVIFTGAGVSAESGIPTFRDALGGLWARYDPAALATPAAFADDPALVWGWYEWRRLKVLGVQPNPAHRAIAALSGRIANTRLVTQNVDDLHERAGSRDVLHLHGSLHAPRCATCAAAYRDALPDSVEPEEGRRIEPPRCPACGGQVRPGVVWFGEALPEAALREAFAAACECDLLLSVGTSGVVQPAARIPGLALEHGASVVHVNPQPVRTRHPREHCLVGPAGEVLPELLRRAFPG</sequence>
<comment type="function">
    <text evidence="1">NAD-dependent lysine deacetylase and desuccinylase that specifically removes acetyl and succinyl groups on target proteins. Modulates the activities of several proteins which are inactive in their acylated form.</text>
</comment>
<comment type="catalytic activity">
    <reaction evidence="1">
        <text>N(6)-acetyl-L-lysyl-[protein] + NAD(+) + H2O = 2''-O-acetyl-ADP-D-ribose + nicotinamide + L-lysyl-[protein]</text>
        <dbReference type="Rhea" id="RHEA:43636"/>
        <dbReference type="Rhea" id="RHEA-COMP:9752"/>
        <dbReference type="Rhea" id="RHEA-COMP:10731"/>
        <dbReference type="ChEBI" id="CHEBI:15377"/>
        <dbReference type="ChEBI" id="CHEBI:17154"/>
        <dbReference type="ChEBI" id="CHEBI:29969"/>
        <dbReference type="ChEBI" id="CHEBI:57540"/>
        <dbReference type="ChEBI" id="CHEBI:61930"/>
        <dbReference type="ChEBI" id="CHEBI:83767"/>
        <dbReference type="EC" id="2.3.1.286"/>
    </reaction>
</comment>
<comment type="catalytic activity">
    <reaction evidence="1">
        <text>N(6)-succinyl-L-lysyl-[protein] + NAD(+) + H2O = 2''-O-succinyl-ADP-D-ribose + nicotinamide + L-lysyl-[protein]</text>
        <dbReference type="Rhea" id="RHEA:47668"/>
        <dbReference type="Rhea" id="RHEA-COMP:9752"/>
        <dbReference type="Rhea" id="RHEA-COMP:11877"/>
        <dbReference type="ChEBI" id="CHEBI:15377"/>
        <dbReference type="ChEBI" id="CHEBI:17154"/>
        <dbReference type="ChEBI" id="CHEBI:29969"/>
        <dbReference type="ChEBI" id="CHEBI:57540"/>
        <dbReference type="ChEBI" id="CHEBI:87830"/>
        <dbReference type="ChEBI" id="CHEBI:87832"/>
    </reaction>
</comment>
<comment type="cofactor">
    <cofactor evidence="1">
        <name>Zn(2+)</name>
        <dbReference type="ChEBI" id="CHEBI:29105"/>
    </cofactor>
    <text evidence="1">Binds 1 zinc ion per subunit.</text>
</comment>
<comment type="subcellular location">
    <subcellularLocation>
        <location evidence="1">Cytoplasm</location>
    </subcellularLocation>
</comment>
<comment type="domain">
    <text evidence="1">2 residues (Tyr-64 and Arg-67) present in a large hydrophobic pocket are probably involved in substrate specificity. They are important for desuccinylation activity, but dispensable for deacetylation activity.</text>
</comment>
<comment type="similarity">
    <text evidence="1">Belongs to the sirtuin family. Class III subfamily.</text>
</comment>